<comment type="function">
    <text evidence="1">Murein-degrading enzyme. May play a role in recycling of muropeptides during cell elongation and/or cell division. Preferentially cleaves at a distance of more than two disaccharide units from the ends of the glycan chain.</text>
</comment>
<comment type="catalytic activity">
    <reaction evidence="1">
        <text>Endolytic cleavage of the (1-&gt;4)-beta-glycosidic linkage between N-acetylmuramic acid (MurNAc) and N-acetylglucosamine (GlcNAc) residues in peptidoglycan with concomitant formation of a 1,6-anhydrobond in the MurNAc residue.</text>
        <dbReference type="EC" id="4.2.2.n2"/>
    </reaction>
</comment>
<comment type="subcellular location">
    <subcellularLocation>
        <location evidence="1">Cell outer membrane</location>
        <topology evidence="1">Lipid-anchor</topology>
    </subcellularLocation>
</comment>
<comment type="similarity">
    <text evidence="1">Belongs to the transglycosylase Slt family.</text>
</comment>
<gene>
    <name evidence="1" type="primary">emtA</name>
    <name type="ordered locus">EcSMS35_1955</name>
</gene>
<protein>
    <recommendedName>
        <fullName evidence="1">Endo-type membrane-bound lytic murein transglycosylase A</fullName>
        <ecNumber evidence="1">4.2.2.n2</ecNumber>
    </recommendedName>
    <alternativeName>
        <fullName evidence="1">Peptidoglycan lytic endotransglycosylase</fullName>
    </alternativeName>
</protein>
<keyword id="KW-0998">Cell outer membrane</keyword>
<keyword id="KW-0961">Cell wall biogenesis/degradation</keyword>
<keyword id="KW-0449">Lipoprotein</keyword>
<keyword id="KW-0456">Lyase</keyword>
<keyword id="KW-0472">Membrane</keyword>
<keyword id="KW-0564">Palmitate</keyword>
<keyword id="KW-0732">Signal</keyword>
<organism>
    <name type="scientific">Escherichia coli (strain SMS-3-5 / SECEC)</name>
    <dbReference type="NCBI Taxonomy" id="439855"/>
    <lineage>
        <taxon>Bacteria</taxon>
        <taxon>Pseudomonadati</taxon>
        <taxon>Pseudomonadota</taxon>
        <taxon>Gammaproteobacteria</taxon>
        <taxon>Enterobacterales</taxon>
        <taxon>Enterobacteriaceae</taxon>
        <taxon>Escherichia</taxon>
    </lineage>
</organism>
<name>EMTA_ECOSM</name>
<feature type="signal peptide" evidence="1">
    <location>
        <begin position="1"/>
        <end position="15"/>
    </location>
</feature>
<feature type="chain" id="PRO_1000144955" description="Endo-type membrane-bound lytic murein transglycosylase A">
    <location>
        <begin position="16"/>
        <end position="203"/>
    </location>
</feature>
<feature type="lipid moiety-binding region" description="N-palmitoyl cysteine" evidence="1">
    <location>
        <position position="16"/>
    </location>
</feature>
<feature type="lipid moiety-binding region" description="S-diacylglycerol cysteine" evidence="1">
    <location>
        <position position="16"/>
    </location>
</feature>
<reference key="1">
    <citation type="journal article" date="2008" name="J. Bacteriol.">
        <title>Insights into the environmental resistance gene pool from the genome sequence of the multidrug-resistant environmental isolate Escherichia coli SMS-3-5.</title>
        <authorList>
            <person name="Fricke W.F."/>
            <person name="Wright M.S."/>
            <person name="Lindell A.H."/>
            <person name="Harkins D.M."/>
            <person name="Baker-Austin C."/>
            <person name="Ravel J."/>
            <person name="Stepanauskas R."/>
        </authorList>
    </citation>
    <scope>NUCLEOTIDE SEQUENCE [LARGE SCALE GENOMIC DNA]</scope>
    <source>
        <strain>SMS-3-5 / SECEC</strain>
    </source>
</reference>
<sequence>MKLRWFAFLIVLLAGCSSKHDYTNPPWNAKVPVQRAMQWMPISQKAGAAWGVDPQLITAIIAIESGGNPNAVSKSNAIGLMQIKASTSGRDVYRRMGWSGEPTTSELKNPERNISMGAAYLNILETGPLAGIEDPKVLQYALVVSYANGAGALLRTFSSDRKKAISKINDLDADEFLDHVARNHPAPQAPRYIYKLEQALDAM</sequence>
<evidence type="ECO:0000255" key="1">
    <source>
        <dbReference type="HAMAP-Rule" id="MF_01381"/>
    </source>
</evidence>
<proteinExistence type="inferred from homology"/>
<dbReference type="EC" id="4.2.2.n2" evidence="1"/>
<dbReference type="EMBL" id="CP000970">
    <property type="protein sequence ID" value="ACB18958.1"/>
    <property type="molecule type" value="Genomic_DNA"/>
</dbReference>
<dbReference type="RefSeq" id="WP_001295994.1">
    <property type="nucleotide sequence ID" value="NC_010498.1"/>
</dbReference>
<dbReference type="SMR" id="B1LHX3"/>
<dbReference type="CAZy" id="GH23">
    <property type="family name" value="Glycoside Hydrolase Family 23"/>
</dbReference>
<dbReference type="KEGG" id="ecm:EcSMS35_1955"/>
<dbReference type="HOGENOM" id="CLU_103257_0_0_6"/>
<dbReference type="Proteomes" id="UP000007011">
    <property type="component" value="Chromosome"/>
</dbReference>
<dbReference type="GO" id="GO:0009279">
    <property type="term" value="C:cell outer membrane"/>
    <property type="evidence" value="ECO:0007669"/>
    <property type="project" value="UniProtKB-SubCell"/>
</dbReference>
<dbReference type="GO" id="GO:0008932">
    <property type="term" value="F:lytic endotransglycosylase activity"/>
    <property type="evidence" value="ECO:0007669"/>
    <property type="project" value="InterPro"/>
</dbReference>
<dbReference type="GO" id="GO:0016998">
    <property type="term" value="P:cell wall macromolecule catabolic process"/>
    <property type="evidence" value="ECO:0007669"/>
    <property type="project" value="UniProtKB-UniRule"/>
</dbReference>
<dbReference type="GO" id="GO:0071555">
    <property type="term" value="P:cell wall organization"/>
    <property type="evidence" value="ECO:0007669"/>
    <property type="project" value="UniProtKB-KW"/>
</dbReference>
<dbReference type="GO" id="GO:0000270">
    <property type="term" value="P:peptidoglycan metabolic process"/>
    <property type="evidence" value="ECO:0007669"/>
    <property type="project" value="InterPro"/>
</dbReference>
<dbReference type="CDD" id="cd16893">
    <property type="entry name" value="LT_MltC_MltE"/>
    <property type="match status" value="1"/>
</dbReference>
<dbReference type="FunFam" id="1.10.530.10:FF:000007">
    <property type="entry name" value="Endo-type membrane-bound lytic murein transglycosylase A"/>
    <property type="match status" value="1"/>
</dbReference>
<dbReference type="Gene3D" id="1.10.530.10">
    <property type="match status" value="1"/>
</dbReference>
<dbReference type="HAMAP" id="MF_01381">
    <property type="entry name" value="EmtA"/>
    <property type="match status" value="1"/>
</dbReference>
<dbReference type="InterPro" id="IPR023946">
    <property type="entry name" value="EmtA"/>
</dbReference>
<dbReference type="InterPro" id="IPR023346">
    <property type="entry name" value="Lysozyme-like_dom_sf"/>
</dbReference>
<dbReference type="InterPro" id="IPR000189">
    <property type="entry name" value="Transglyc_AS"/>
</dbReference>
<dbReference type="InterPro" id="IPR008258">
    <property type="entry name" value="Transglycosylase_SLT_dom_1"/>
</dbReference>
<dbReference type="NCBIfam" id="NF012014">
    <property type="entry name" value="PRK15470.1"/>
    <property type="match status" value="1"/>
</dbReference>
<dbReference type="PANTHER" id="PTHR37423:SF4">
    <property type="entry name" value="ENDO-TYPE MEMBRANE-BOUND LYTIC MUREIN TRANSGLYCOSYLASE A"/>
    <property type="match status" value="1"/>
</dbReference>
<dbReference type="PANTHER" id="PTHR37423">
    <property type="entry name" value="SOLUBLE LYTIC MUREIN TRANSGLYCOSYLASE-RELATED"/>
    <property type="match status" value="1"/>
</dbReference>
<dbReference type="Pfam" id="PF01464">
    <property type="entry name" value="SLT"/>
    <property type="match status" value="1"/>
</dbReference>
<dbReference type="SUPFAM" id="SSF53955">
    <property type="entry name" value="Lysozyme-like"/>
    <property type="match status" value="1"/>
</dbReference>
<dbReference type="PROSITE" id="PS51257">
    <property type="entry name" value="PROKAR_LIPOPROTEIN"/>
    <property type="match status" value="1"/>
</dbReference>
<dbReference type="PROSITE" id="PS00922">
    <property type="entry name" value="TRANSGLYCOSYLASE"/>
    <property type="match status" value="1"/>
</dbReference>
<accession>B1LHX3</accession>